<keyword id="KW-0963">Cytoplasm</keyword>
<keyword id="KW-0441">Lipid A biosynthesis</keyword>
<keyword id="KW-0444">Lipid biosynthesis</keyword>
<keyword id="KW-0443">Lipid metabolism</keyword>
<keyword id="KW-0456">Lyase</keyword>
<keyword id="KW-1185">Reference proteome</keyword>
<proteinExistence type="inferred from homology"/>
<organism>
    <name type="scientific">Thermotoga maritima (strain ATCC 43589 / DSM 3109 / JCM 10099 / NBRC 100826 / MSB8)</name>
    <dbReference type="NCBI Taxonomy" id="243274"/>
    <lineage>
        <taxon>Bacteria</taxon>
        <taxon>Thermotogati</taxon>
        <taxon>Thermotogota</taxon>
        <taxon>Thermotogae</taxon>
        <taxon>Thermotogales</taxon>
        <taxon>Thermotogaceae</taxon>
        <taxon>Thermotoga</taxon>
    </lineage>
</organism>
<dbReference type="EC" id="4.2.1.59" evidence="1"/>
<dbReference type="EMBL" id="AE000512">
    <property type="protein sequence ID" value="AAD35883.1"/>
    <property type="molecule type" value="Genomic_DNA"/>
</dbReference>
<dbReference type="PIR" id="B72335">
    <property type="entry name" value="B72335"/>
</dbReference>
<dbReference type="RefSeq" id="NP_228610.1">
    <property type="nucleotide sequence ID" value="NC_000853.1"/>
</dbReference>
<dbReference type="RefSeq" id="WP_004080862.1">
    <property type="nucleotide sequence ID" value="NZ_CP011107.1"/>
</dbReference>
<dbReference type="SMR" id="Q9WZQ8"/>
<dbReference type="FunCoup" id="Q9WZQ8">
    <property type="interactions" value="351"/>
</dbReference>
<dbReference type="STRING" id="243274.TM_0801"/>
<dbReference type="PaxDb" id="243274-THEMA_00645"/>
<dbReference type="EnsemblBacteria" id="AAD35883">
    <property type="protein sequence ID" value="AAD35883"/>
    <property type="gene ID" value="TM_0801"/>
</dbReference>
<dbReference type="KEGG" id="tma:TM0801"/>
<dbReference type="KEGG" id="tmi:THEMA_00645"/>
<dbReference type="KEGG" id="tmm:Tmari_0802"/>
<dbReference type="KEGG" id="tmw:THMA_0820"/>
<dbReference type="eggNOG" id="COG0764">
    <property type="taxonomic scope" value="Bacteria"/>
</dbReference>
<dbReference type="InParanoid" id="Q9WZQ8"/>
<dbReference type="OrthoDB" id="9772788at2"/>
<dbReference type="Proteomes" id="UP000008183">
    <property type="component" value="Chromosome"/>
</dbReference>
<dbReference type="GO" id="GO:0005737">
    <property type="term" value="C:cytoplasm"/>
    <property type="evidence" value="ECO:0007669"/>
    <property type="project" value="UniProtKB-SubCell"/>
</dbReference>
<dbReference type="GO" id="GO:0016020">
    <property type="term" value="C:membrane"/>
    <property type="evidence" value="ECO:0007669"/>
    <property type="project" value="GOC"/>
</dbReference>
<dbReference type="GO" id="GO:0019171">
    <property type="term" value="F:(3R)-hydroxyacyl-[acyl-carrier-protein] dehydratase activity"/>
    <property type="evidence" value="ECO:0007669"/>
    <property type="project" value="UniProtKB-EC"/>
</dbReference>
<dbReference type="GO" id="GO:0006633">
    <property type="term" value="P:fatty acid biosynthetic process"/>
    <property type="evidence" value="ECO:0007669"/>
    <property type="project" value="UniProtKB-UniRule"/>
</dbReference>
<dbReference type="GO" id="GO:0009245">
    <property type="term" value="P:lipid A biosynthetic process"/>
    <property type="evidence" value="ECO:0007669"/>
    <property type="project" value="UniProtKB-UniRule"/>
</dbReference>
<dbReference type="CDD" id="cd01288">
    <property type="entry name" value="FabZ"/>
    <property type="match status" value="1"/>
</dbReference>
<dbReference type="FunFam" id="3.10.129.10:FF:000001">
    <property type="entry name" value="3-hydroxyacyl-[acyl-carrier-protein] dehydratase FabZ"/>
    <property type="match status" value="1"/>
</dbReference>
<dbReference type="Gene3D" id="3.10.129.10">
    <property type="entry name" value="Hotdog Thioesterase"/>
    <property type="match status" value="1"/>
</dbReference>
<dbReference type="HAMAP" id="MF_00406">
    <property type="entry name" value="FabZ"/>
    <property type="match status" value="1"/>
</dbReference>
<dbReference type="InterPro" id="IPR013114">
    <property type="entry name" value="FabA_FabZ"/>
</dbReference>
<dbReference type="InterPro" id="IPR010084">
    <property type="entry name" value="FabZ"/>
</dbReference>
<dbReference type="InterPro" id="IPR029069">
    <property type="entry name" value="HotDog_dom_sf"/>
</dbReference>
<dbReference type="NCBIfam" id="TIGR01750">
    <property type="entry name" value="fabZ"/>
    <property type="match status" value="1"/>
</dbReference>
<dbReference type="NCBIfam" id="NF000582">
    <property type="entry name" value="PRK00006.1"/>
    <property type="match status" value="1"/>
</dbReference>
<dbReference type="PANTHER" id="PTHR30272">
    <property type="entry name" value="3-HYDROXYACYL-[ACYL-CARRIER-PROTEIN] DEHYDRATASE"/>
    <property type="match status" value="1"/>
</dbReference>
<dbReference type="PANTHER" id="PTHR30272:SF1">
    <property type="entry name" value="3-HYDROXYACYL-[ACYL-CARRIER-PROTEIN] DEHYDRATASE"/>
    <property type="match status" value="1"/>
</dbReference>
<dbReference type="Pfam" id="PF07977">
    <property type="entry name" value="FabA"/>
    <property type="match status" value="1"/>
</dbReference>
<dbReference type="SUPFAM" id="SSF54637">
    <property type="entry name" value="Thioesterase/thiol ester dehydrase-isomerase"/>
    <property type="match status" value="1"/>
</dbReference>
<reference key="1">
    <citation type="journal article" date="1999" name="Nature">
        <title>Evidence for lateral gene transfer between Archaea and Bacteria from genome sequence of Thermotoga maritima.</title>
        <authorList>
            <person name="Nelson K.E."/>
            <person name="Clayton R.A."/>
            <person name="Gill S.R."/>
            <person name="Gwinn M.L."/>
            <person name="Dodson R.J."/>
            <person name="Haft D.H."/>
            <person name="Hickey E.K."/>
            <person name="Peterson J.D."/>
            <person name="Nelson W.C."/>
            <person name="Ketchum K.A."/>
            <person name="McDonald L.A."/>
            <person name="Utterback T.R."/>
            <person name="Malek J.A."/>
            <person name="Linher K.D."/>
            <person name="Garrett M.M."/>
            <person name="Stewart A.M."/>
            <person name="Cotton M.D."/>
            <person name="Pratt M.S."/>
            <person name="Phillips C.A."/>
            <person name="Richardson D.L."/>
            <person name="Heidelberg J.F."/>
            <person name="Sutton G.G."/>
            <person name="Fleischmann R.D."/>
            <person name="Eisen J.A."/>
            <person name="White O."/>
            <person name="Salzberg S.L."/>
            <person name="Smith H.O."/>
            <person name="Venter J.C."/>
            <person name="Fraser C.M."/>
        </authorList>
    </citation>
    <scope>NUCLEOTIDE SEQUENCE [LARGE SCALE GENOMIC DNA]</scope>
    <source>
        <strain>ATCC 43589 / DSM 3109 / JCM 10099 / NBRC 100826 / MSB8</strain>
    </source>
</reference>
<sequence length="137" mass="15300">MNIDYVKSILPHRYPFLLVDGVIEESEDRIVAFKNISISDPVFQGHFPEYPIYPGVLIVEGLAQTAGILLLKSVEGIPLFLGIDEARFKKEVRPGDRLIYEVRKLGEKLGTVQVEGVAKVDDKIVAKARLLLGVKKK</sequence>
<protein>
    <recommendedName>
        <fullName evidence="1">3-hydroxyacyl-[acyl-carrier-protein] dehydratase FabZ</fullName>
        <ecNumber evidence="1">4.2.1.59</ecNumber>
    </recommendedName>
    <alternativeName>
        <fullName evidence="1">(3R)-hydroxymyristoyl-[acyl-carrier-protein] dehydratase</fullName>
        <shortName evidence="1">(3R)-hydroxymyristoyl-ACP dehydrase</shortName>
    </alternativeName>
    <alternativeName>
        <fullName evidence="1">Beta-hydroxyacyl-ACP dehydratase</fullName>
    </alternativeName>
</protein>
<name>FABZ_THEMA</name>
<gene>
    <name evidence="1" type="primary">fabZ</name>
    <name type="ordered locus">TM_0801</name>
</gene>
<accession>Q9WZQ8</accession>
<evidence type="ECO:0000255" key="1">
    <source>
        <dbReference type="HAMAP-Rule" id="MF_00406"/>
    </source>
</evidence>
<feature type="chain" id="PRO_0000091754" description="3-hydroxyacyl-[acyl-carrier-protein] dehydratase FabZ">
    <location>
        <begin position="1"/>
        <end position="137"/>
    </location>
</feature>
<feature type="active site" evidence="1">
    <location>
        <position position="46"/>
    </location>
</feature>
<comment type="function">
    <text evidence="1">Involved in unsaturated fatty acids biosynthesis. Catalyzes the dehydration of short chain beta-hydroxyacyl-ACPs and long chain saturated and unsaturated beta-hydroxyacyl-ACPs.</text>
</comment>
<comment type="catalytic activity">
    <reaction evidence="1">
        <text>a (3R)-hydroxyacyl-[ACP] = a (2E)-enoyl-[ACP] + H2O</text>
        <dbReference type="Rhea" id="RHEA:13097"/>
        <dbReference type="Rhea" id="RHEA-COMP:9925"/>
        <dbReference type="Rhea" id="RHEA-COMP:9945"/>
        <dbReference type="ChEBI" id="CHEBI:15377"/>
        <dbReference type="ChEBI" id="CHEBI:78784"/>
        <dbReference type="ChEBI" id="CHEBI:78827"/>
        <dbReference type="EC" id="4.2.1.59"/>
    </reaction>
</comment>
<comment type="subcellular location">
    <subcellularLocation>
        <location evidence="1">Cytoplasm</location>
    </subcellularLocation>
</comment>
<comment type="similarity">
    <text evidence="1">Belongs to the thioester dehydratase family. FabZ subfamily.</text>
</comment>